<reference key="1">
    <citation type="submission" date="2007-09" db="EMBL/GenBank/DDBJ databases">
        <title>Complete sequence of chromosome of Serratia proteamaculans 568.</title>
        <authorList>
            <consortium name="US DOE Joint Genome Institute"/>
            <person name="Copeland A."/>
            <person name="Lucas S."/>
            <person name="Lapidus A."/>
            <person name="Barry K."/>
            <person name="Glavina del Rio T."/>
            <person name="Dalin E."/>
            <person name="Tice H."/>
            <person name="Pitluck S."/>
            <person name="Chain P."/>
            <person name="Malfatti S."/>
            <person name="Shin M."/>
            <person name="Vergez L."/>
            <person name="Schmutz J."/>
            <person name="Larimer F."/>
            <person name="Land M."/>
            <person name="Hauser L."/>
            <person name="Kyrpides N."/>
            <person name="Kim E."/>
            <person name="Taghavi S."/>
            <person name="Newman L."/>
            <person name="Vangronsveld J."/>
            <person name="van der Lelie D."/>
            <person name="Richardson P."/>
        </authorList>
    </citation>
    <scope>NUCLEOTIDE SEQUENCE [LARGE SCALE GENOMIC DNA]</scope>
    <source>
        <strain>568</strain>
    </source>
</reference>
<keyword id="KW-0574">Periplasm</keyword>
<keyword id="KW-0732">Signal</keyword>
<comment type="function">
    <text evidence="1">Involved in the biosynthesis of osmoregulated periplasmic glucans (OPGs).</text>
</comment>
<comment type="pathway">
    <text evidence="1">Glycan metabolism; osmoregulated periplasmic glucan (OPG) biosynthesis.</text>
</comment>
<comment type="subcellular location">
    <subcellularLocation>
        <location evidence="1">Periplasm</location>
    </subcellularLocation>
</comment>
<comment type="similarity">
    <text evidence="1">Belongs to the OpgD/OpgG family.</text>
</comment>
<gene>
    <name evidence="1" type="primary">mdoG</name>
    <name evidence="1" type="synonym">opgG</name>
    <name type="ordered locus">Spro_1870</name>
</gene>
<evidence type="ECO:0000255" key="1">
    <source>
        <dbReference type="HAMAP-Rule" id="MF_01069"/>
    </source>
</evidence>
<sequence length="522" mass="58791">MLVNILSKKPRAASVRWLGATVLFTLLTSPAWAFSIDDVAKQAQDLAGKGFEAPKSNLPSQFREMKFADYQQIQFNHDKAYWSKLKTPFKLEFYHQGMYFDTPVKINEVTSTTVKQIKYSPDYFNFGSVKHDPDSVKNLGFAGFKVIYPINSADKNDEIMSLLGASYFRVVGKGQVYGISARGLAIDTALPSGEEFPRFREFWVERPKQGDKHLVIYALLDSPRATGAYRFVVYPGRDTTVDVESKVFLRDKVGKLGMAPLTSMYLFGPNQPSPTLNYRPALHDSNGLSIHAGNGEWIWRPLNNPKHLSVSTYQVENPKGFGLLQRGRNFKDYEDLDDRYDLRPSAWIEPRGDWGKGKVELVEIPTADETNDNIVAFWTPDVLPDAKTPLALNYRLHFTRDEDKLHSQDIAYVSQTMRSTGDVKQSNLIREPDGSVAFLVDFVGPVLKGLDGATPVAAQVSIGDNGEMVENNVRYNPVTKGWRLTLRLKVKDDKKPVEMRAALVNGDKTLSETWSYQLPANE</sequence>
<name>OPGG_SERP5</name>
<organism>
    <name type="scientific">Serratia proteamaculans (strain 568)</name>
    <dbReference type="NCBI Taxonomy" id="399741"/>
    <lineage>
        <taxon>Bacteria</taxon>
        <taxon>Pseudomonadati</taxon>
        <taxon>Pseudomonadota</taxon>
        <taxon>Gammaproteobacteria</taxon>
        <taxon>Enterobacterales</taxon>
        <taxon>Yersiniaceae</taxon>
        <taxon>Serratia</taxon>
    </lineage>
</organism>
<protein>
    <recommendedName>
        <fullName evidence="1">Glucans biosynthesis protein G</fullName>
    </recommendedName>
</protein>
<accession>A8GCY3</accession>
<proteinExistence type="inferred from homology"/>
<dbReference type="EMBL" id="CP000826">
    <property type="protein sequence ID" value="ABV40973.1"/>
    <property type="molecule type" value="Genomic_DNA"/>
</dbReference>
<dbReference type="SMR" id="A8GCY3"/>
<dbReference type="STRING" id="399741.Spro_1870"/>
<dbReference type="KEGG" id="spe:Spro_1870"/>
<dbReference type="eggNOG" id="COG3131">
    <property type="taxonomic scope" value="Bacteria"/>
</dbReference>
<dbReference type="HOGENOM" id="CLU_023403_2_0_6"/>
<dbReference type="UniPathway" id="UPA00637"/>
<dbReference type="GO" id="GO:0030288">
    <property type="term" value="C:outer membrane-bounded periplasmic space"/>
    <property type="evidence" value="ECO:0007669"/>
    <property type="project" value="TreeGrafter"/>
</dbReference>
<dbReference type="GO" id="GO:0030246">
    <property type="term" value="F:carbohydrate binding"/>
    <property type="evidence" value="ECO:0007669"/>
    <property type="project" value="InterPro"/>
</dbReference>
<dbReference type="GO" id="GO:0003824">
    <property type="term" value="F:catalytic activity"/>
    <property type="evidence" value="ECO:0007669"/>
    <property type="project" value="InterPro"/>
</dbReference>
<dbReference type="GO" id="GO:0051274">
    <property type="term" value="P:beta-glucan biosynthetic process"/>
    <property type="evidence" value="ECO:0007669"/>
    <property type="project" value="TreeGrafter"/>
</dbReference>
<dbReference type="FunFam" id="2.70.98.10:FF:000001">
    <property type="entry name" value="Glucans biosynthesis protein G"/>
    <property type="match status" value="1"/>
</dbReference>
<dbReference type="Gene3D" id="2.70.98.10">
    <property type="match status" value="1"/>
</dbReference>
<dbReference type="Gene3D" id="2.60.40.10">
    <property type="entry name" value="Immunoglobulins"/>
    <property type="match status" value="1"/>
</dbReference>
<dbReference type="HAMAP" id="MF_01069">
    <property type="entry name" value="MdoG_OpgG"/>
    <property type="match status" value="1"/>
</dbReference>
<dbReference type="InterPro" id="IPR011013">
    <property type="entry name" value="Gal_mutarotase_sf_dom"/>
</dbReference>
<dbReference type="InterPro" id="IPR014718">
    <property type="entry name" value="GH-type_carb-bd"/>
</dbReference>
<dbReference type="InterPro" id="IPR014438">
    <property type="entry name" value="Glucan_biosyn_MdoG/MdoD"/>
</dbReference>
<dbReference type="InterPro" id="IPR007444">
    <property type="entry name" value="Glucan_biosyn_MdoG_C"/>
</dbReference>
<dbReference type="InterPro" id="IPR013783">
    <property type="entry name" value="Ig-like_fold"/>
</dbReference>
<dbReference type="InterPro" id="IPR014756">
    <property type="entry name" value="Ig_E-set"/>
</dbReference>
<dbReference type="InterPro" id="IPR023704">
    <property type="entry name" value="MdoG_OpgG"/>
</dbReference>
<dbReference type="PANTHER" id="PTHR30504">
    <property type="entry name" value="GLUCANS BIOSYNTHESIS PROTEIN"/>
    <property type="match status" value="1"/>
</dbReference>
<dbReference type="PANTHER" id="PTHR30504:SF4">
    <property type="entry name" value="GLUCANS BIOSYNTHESIS PROTEIN G"/>
    <property type="match status" value="1"/>
</dbReference>
<dbReference type="Pfam" id="PF04349">
    <property type="entry name" value="MdoG"/>
    <property type="match status" value="1"/>
</dbReference>
<dbReference type="PIRSF" id="PIRSF006281">
    <property type="entry name" value="MdoG"/>
    <property type="match status" value="1"/>
</dbReference>
<dbReference type="SUPFAM" id="SSF81296">
    <property type="entry name" value="E set domains"/>
    <property type="match status" value="1"/>
</dbReference>
<dbReference type="SUPFAM" id="SSF74650">
    <property type="entry name" value="Galactose mutarotase-like"/>
    <property type="match status" value="1"/>
</dbReference>
<feature type="signal peptide" evidence="1">
    <location>
        <begin position="1"/>
        <end position="33"/>
    </location>
</feature>
<feature type="chain" id="PRO_5000279276" description="Glucans biosynthesis protein G">
    <location>
        <begin position="34"/>
        <end position="522"/>
    </location>
</feature>